<proteinExistence type="inferred from homology"/>
<name>PCBC_PROMT</name>
<keyword id="KW-0148">Chlorophyll</keyword>
<keyword id="KW-0157">Chromophore</keyword>
<keyword id="KW-0472">Membrane</keyword>
<keyword id="KW-0602">Photosynthesis</keyword>
<keyword id="KW-0603">Photosystem I</keyword>
<keyword id="KW-0604">Photosystem II</keyword>
<keyword id="KW-1185">Reference proteome</keyword>
<keyword id="KW-0793">Thylakoid</keyword>
<keyword id="KW-0812">Transmembrane</keyword>
<keyword id="KW-1133">Transmembrane helix</keyword>
<comment type="function">
    <text evidence="2">The antenna complex functions as a light receptor, it captures and delivers excitation energy to photosystems II and I. The Prochlorales pcb genes are not related to higher plant LHCs.</text>
</comment>
<comment type="cofactor">
    <cofactor evidence="2">
        <name>divinyl chlorophyll a</name>
        <dbReference type="ChEBI" id="CHEBI:73095"/>
    </cofactor>
</comment>
<comment type="cofactor">
    <cofactor evidence="2">
        <name>divinyl chlorophyll b</name>
        <dbReference type="ChEBI" id="CHEBI:73096"/>
    </cofactor>
</comment>
<comment type="subunit">
    <text evidence="2">The antenna complex consists of divinyl chlorophylls (a and b) and divinyl chlorophyll a/b binding proteins and binds more divinyl chlorophyll b than does the antenna complex from high-light-adapted Prochlorococcus.</text>
</comment>
<comment type="subcellular location">
    <subcellularLocation>
        <location evidence="2">Cellular thylakoid membrane</location>
        <topology evidence="1">Multi-pass membrane protein</topology>
    </subcellularLocation>
</comment>
<comment type="miscellaneous">
    <text evidence="4">This low-light-adapted strain contains 7 pcb genes.</text>
</comment>
<comment type="similarity">
    <text evidence="5">Belongs to the PsbB/PsbC family. IsiA/Pcb subfamily.</text>
</comment>
<accession>Q46JX0</accession>
<gene>
    <name type="primary">pcbC</name>
    <name type="ordered locus">PMN2A_0717</name>
</gene>
<sequence>MQTYGNPDVTYGWWVGNSVVTNRAGRFIGSHIGHTGLICFAAGGSTLWELARYNPEIPMGHQSSIFLAHLASLGLGFDEAGVWTGAGVATIAIFHLIFSAVYGTAGLAHSLLFDPDLKDGPIPTTKKFKLEWDNPDNLTFILGHHLIFFGVANIWFVEWARWHGIYDPAIGEIRTIFPGYGDFGMVYGHQFDFLTIDSLEEVMSGHAFLAFVQISGGAWHIATKQLGEYTEFKGKGLLSAEAVLSWSLAGIGWMAIVAAFWCAQNTTVYPIDWYGEPLALKFGISPYWVDTGDVSDSTAFLGHTTRAALSNVHYYFGFFFIQGHIWHALRAMGFDFRRVVGSVASLATTES</sequence>
<feature type="chain" id="PRO_0000077551" description="Divinyl chlorophyll a/b light-harvesting protein PcbC">
    <location>
        <begin position="1"/>
        <end position="351"/>
    </location>
</feature>
<feature type="transmembrane region" description="Helical" evidence="3">
    <location>
        <begin position="27"/>
        <end position="47"/>
    </location>
</feature>
<feature type="transmembrane region" description="Helical" evidence="3">
    <location>
        <begin position="81"/>
        <end position="101"/>
    </location>
</feature>
<feature type="transmembrane region" description="Helical" evidence="3">
    <location>
        <begin position="140"/>
        <end position="160"/>
    </location>
</feature>
<feature type="transmembrane region" description="Helical" evidence="3">
    <location>
        <begin position="202"/>
        <end position="222"/>
    </location>
</feature>
<feature type="transmembrane region" description="Helical" evidence="3">
    <location>
        <begin position="242"/>
        <end position="262"/>
    </location>
</feature>
<feature type="transmembrane region" description="Helical" evidence="3">
    <location>
        <begin position="309"/>
        <end position="329"/>
    </location>
</feature>
<protein>
    <recommendedName>
        <fullName>Divinyl chlorophyll a/b light-harvesting protein PcbC</fullName>
    </recommendedName>
</protein>
<dbReference type="EMBL" id="CP000095">
    <property type="protein sequence ID" value="AAZ58208.1"/>
    <property type="molecule type" value="Genomic_DNA"/>
</dbReference>
<dbReference type="RefSeq" id="WP_011294806.1">
    <property type="nucleotide sequence ID" value="NC_007335.2"/>
</dbReference>
<dbReference type="SMR" id="Q46JX0"/>
<dbReference type="STRING" id="59920.PMN2A_0717"/>
<dbReference type="KEGG" id="pmn:PMN2A_0717"/>
<dbReference type="HOGENOM" id="CLU_028310_0_0_3"/>
<dbReference type="OrthoDB" id="9429529at2"/>
<dbReference type="PhylomeDB" id="Q46JX0"/>
<dbReference type="Proteomes" id="UP000002535">
    <property type="component" value="Chromosome"/>
</dbReference>
<dbReference type="GO" id="GO:0009522">
    <property type="term" value="C:photosystem I"/>
    <property type="evidence" value="ECO:0007669"/>
    <property type="project" value="UniProtKB-KW"/>
</dbReference>
<dbReference type="GO" id="GO:0009523">
    <property type="term" value="C:photosystem II"/>
    <property type="evidence" value="ECO:0007669"/>
    <property type="project" value="UniProtKB-KW"/>
</dbReference>
<dbReference type="GO" id="GO:0031676">
    <property type="term" value="C:plasma membrane-derived thylakoid membrane"/>
    <property type="evidence" value="ECO:0007669"/>
    <property type="project" value="UniProtKB-SubCell"/>
</dbReference>
<dbReference type="GO" id="GO:0016168">
    <property type="term" value="F:chlorophyll binding"/>
    <property type="evidence" value="ECO:0007669"/>
    <property type="project" value="UniProtKB-KW"/>
</dbReference>
<dbReference type="GO" id="GO:0009767">
    <property type="term" value="P:photosynthetic electron transport chain"/>
    <property type="evidence" value="ECO:0007669"/>
    <property type="project" value="InterPro"/>
</dbReference>
<dbReference type="InterPro" id="IPR000932">
    <property type="entry name" value="PS_antenna-like"/>
</dbReference>
<dbReference type="InterPro" id="IPR036001">
    <property type="entry name" value="PS_II_antenna-like_sf"/>
</dbReference>
<dbReference type="NCBIfam" id="TIGR03041">
    <property type="entry name" value="PS_antenn_a_b"/>
    <property type="match status" value="1"/>
</dbReference>
<dbReference type="Pfam" id="PF00421">
    <property type="entry name" value="PSII"/>
    <property type="match status" value="1"/>
</dbReference>
<dbReference type="SUPFAM" id="SSF161077">
    <property type="entry name" value="Photosystem II antenna protein-like"/>
    <property type="match status" value="1"/>
</dbReference>
<organism>
    <name type="scientific">Prochlorococcus marinus (strain NATL2A)</name>
    <dbReference type="NCBI Taxonomy" id="59920"/>
    <lineage>
        <taxon>Bacteria</taxon>
        <taxon>Bacillati</taxon>
        <taxon>Cyanobacteriota</taxon>
        <taxon>Cyanophyceae</taxon>
        <taxon>Synechococcales</taxon>
        <taxon>Prochlorococcaceae</taxon>
        <taxon>Prochlorococcus</taxon>
    </lineage>
</organism>
<evidence type="ECO:0000250" key="1"/>
<evidence type="ECO:0000250" key="2">
    <source>
        <dbReference type="UniProtKB" id="Q6Q972"/>
    </source>
</evidence>
<evidence type="ECO:0000255" key="3"/>
<evidence type="ECO:0000303" key="4">
    <source>
    </source>
</evidence>
<evidence type="ECO:0000305" key="5"/>
<reference key="1">
    <citation type="journal article" date="2007" name="PLoS Genet.">
        <title>Patterns and implications of gene gain and loss in the evolution of Prochlorococcus.</title>
        <authorList>
            <person name="Kettler G.C."/>
            <person name="Martiny A.C."/>
            <person name="Huang K."/>
            <person name="Zucker J."/>
            <person name="Coleman M.L."/>
            <person name="Rodrigue S."/>
            <person name="Chen F."/>
            <person name="Lapidus A."/>
            <person name="Ferriera S."/>
            <person name="Johnson J."/>
            <person name="Steglich C."/>
            <person name="Church G.M."/>
            <person name="Richardson P."/>
            <person name="Chisholm S.W."/>
        </authorList>
    </citation>
    <scope>NUCLEOTIDE SEQUENCE [LARGE SCALE GENOMIC DNA]</scope>
    <source>
        <strain>NATL2A</strain>
    </source>
</reference>